<gene>
    <name evidence="1" type="primary">hemE</name>
    <name type="ordered locus">SAUSA300_1783</name>
</gene>
<accession>Q2FFR2</accession>
<organism>
    <name type="scientific">Staphylococcus aureus (strain USA300)</name>
    <dbReference type="NCBI Taxonomy" id="367830"/>
    <lineage>
        <taxon>Bacteria</taxon>
        <taxon>Bacillati</taxon>
        <taxon>Bacillota</taxon>
        <taxon>Bacilli</taxon>
        <taxon>Bacillales</taxon>
        <taxon>Staphylococcaceae</taxon>
        <taxon>Staphylococcus</taxon>
    </lineage>
</organism>
<sequence>MVHNKNNTILKMIKGEETSHTPVWFMRQAGRSQPEYRKLKEKYSLFDITHQPELCAYVTHLPVDNYHTDAAILYKDIMTPLKPIGVDVEIKSGIGPVIHNPIKTIQDVEKLSQIDPERDVPYVLDTIKLLTEEKLNVPLIGFTGAPFTLASYMIEGGPSKNYNFTKAMMYRDEATWFALMNHLVDVSVKYVTAQVEAGAELIQIFDSWVGALNVEDYRRYIKPHMIRLISEVKEKHDVPVILFGVGASHLINEWNDLPIDVLGLDWRTSINQAQQLGVTKTLQGNLDPSILLAPWNVIEERLKPILDQGMENGKHIFNLGHGVFPEVQPETLRKVSEFVHTYTQR</sequence>
<keyword id="KW-0963">Cytoplasm</keyword>
<keyword id="KW-0210">Decarboxylase</keyword>
<keyword id="KW-0456">Lyase</keyword>
<keyword id="KW-0627">Porphyrin biosynthesis</keyword>
<protein>
    <recommendedName>
        <fullName evidence="1">Uroporphyrinogen decarboxylase</fullName>
        <shortName evidence="1">UPD</shortName>
        <shortName evidence="1">URO-D</shortName>
        <ecNumber evidence="1">4.1.1.37</ecNumber>
    </recommendedName>
</protein>
<proteinExistence type="inferred from homology"/>
<comment type="function">
    <text evidence="1">Catalyzes the decarboxylation of four acetate groups of uroporphyrinogen-III to yield coproporphyrinogen-III.</text>
</comment>
<comment type="catalytic activity">
    <reaction evidence="1">
        <text>uroporphyrinogen III + 4 H(+) = coproporphyrinogen III + 4 CO2</text>
        <dbReference type="Rhea" id="RHEA:19865"/>
        <dbReference type="ChEBI" id="CHEBI:15378"/>
        <dbReference type="ChEBI" id="CHEBI:16526"/>
        <dbReference type="ChEBI" id="CHEBI:57308"/>
        <dbReference type="ChEBI" id="CHEBI:57309"/>
        <dbReference type="EC" id="4.1.1.37"/>
    </reaction>
</comment>
<comment type="pathway">
    <text evidence="1">Porphyrin-containing compound metabolism; protoporphyrin-IX biosynthesis; coproporphyrinogen-III from 5-aminolevulinate: step 4/4.</text>
</comment>
<comment type="subunit">
    <text evidence="1">Homodimer.</text>
</comment>
<comment type="subcellular location">
    <subcellularLocation>
        <location evidence="1">Cytoplasm</location>
    </subcellularLocation>
</comment>
<comment type="similarity">
    <text evidence="1">Belongs to the uroporphyrinogen decarboxylase family.</text>
</comment>
<reference key="1">
    <citation type="journal article" date="2006" name="Lancet">
        <title>Complete genome sequence of USA300, an epidemic clone of community-acquired meticillin-resistant Staphylococcus aureus.</title>
        <authorList>
            <person name="Diep B.A."/>
            <person name="Gill S.R."/>
            <person name="Chang R.F."/>
            <person name="Phan T.H."/>
            <person name="Chen J.H."/>
            <person name="Davidson M.G."/>
            <person name="Lin F."/>
            <person name="Lin J."/>
            <person name="Carleton H.A."/>
            <person name="Mongodin E.F."/>
            <person name="Sensabaugh G.F."/>
            <person name="Perdreau-Remington F."/>
        </authorList>
    </citation>
    <scope>NUCLEOTIDE SEQUENCE [LARGE SCALE GENOMIC DNA]</scope>
    <source>
        <strain>USA300</strain>
    </source>
</reference>
<name>DCUP_STAA3</name>
<evidence type="ECO:0000255" key="1">
    <source>
        <dbReference type="HAMAP-Rule" id="MF_00218"/>
    </source>
</evidence>
<feature type="chain" id="PRO_1000023983" description="Uroporphyrinogen decarboxylase">
    <location>
        <begin position="1"/>
        <end position="345"/>
    </location>
</feature>
<feature type="binding site" evidence="1">
    <location>
        <begin position="27"/>
        <end position="31"/>
    </location>
    <ligand>
        <name>substrate</name>
    </ligand>
</feature>
<feature type="binding site" evidence="1">
    <location>
        <position position="46"/>
    </location>
    <ligand>
        <name>substrate</name>
    </ligand>
</feature>
<feature type="binding site" evidence="1">
    <location>
        <position position="76"/>
    </location>
    <ligand>
        <name>substrate</name>
    </ligand>
</feature>
<feature type="binding site" evidence="1">
    <location>
        <position position="152"/>
    </location>
    <ligand>
        <name>substrate</name>
    </ligand>
</feature>
<feature type="binding site" evidence="1">
    <location>
        <position position="207"/>
    </location>
    <ligand>
        <name>substrate</name>
    </ligand>
</feature>
<feature type="binding site" evidence="1">
    <location>
        <position position="321"/>
    </location>
    <ligand>
        <name>substrate</name>
    </ligand>
</feature>
<feature type="site" description="Transition state stabilizer" evidence="1">
    <location>
        <position position="76"/>
    </location>
</feature>
<dbReference type="EC" id="4.1.1.37" evidence="1"/>
<dbReference type="EMBL" id="CP000255">
    <property type="protein sequence ID" value="ABD22916.1"/>
    <property type="molecule type" value="Genomic_DNA"/>
</dbReference>
<dbReference type="RefSeq" id="WP_000233526.1">
    <property type="nucleotide sequence ID" value="NZ_CP027476.1"/>
</dbReference>
<dbReference type="SMR" id="Q2FFR2"/>
<dbReference type="KEGG" id="saa:SAUSA300_1783"/>
<dbReference type="HOGENOM" id="CLU_040933_0_1_9"/>
<dbReference type="UniPathway" id="UPA00251">
    <property type="reaction ID" value="UER00321"/>
</dbReference>
<dbReference type="Proteomes" id="UP000001939">
    <property type="component" value="Chromosome"/>
</dbReference>
<dbReference type="GO" id="GO:0005829">
    <property type="term" value="C:cytosol"/>
    <property type="evidence" value="ECO:0007669"/>
    <property type="project" value="TreeGrafter"/>
</dbReference>
<dbReference type="GO" id="GO:0004853">
    <property type="term" value="F:uroporphyrinogen decarboxylase activity"/>
    <property type="evidence" value="ECO:0007669"/>
    <property type="project" value="UniProtKB-UniRule"/>
</dbReference>
<dbReference type="GO" id="GO:0006782">
    <property type="term" value="P:protoporphyrinogen IX biosynthetic process"/>
    <property type="evidence" value="ECO:0007669"/>
    <property type="project" value="UniProtKB-UniRule"/>
</dbReference>
<dbReference type="CDD" id="cd00717">
    <property type="entry name" value="URO-D"/>
    <property type="match status" value="1"/>
</dbReference>
<dbReference type="FunFam" id="3.20.20.210:FF:000005">
    <property type="entry name" value="Uroporphyrinogen decarboxylase"/>
    <property type="match status" value="1"/>
</dbReference>
<dbReference type="Gene3D" id="3.20.20.210">
    <property type="match status" value="1"/>
</dbReference>
<dbReference type="HAMAP" id="MF_00218">
    <property type="entry name" value="URO_D"/>
    <property type="match status" value="1"/>
</dbReference>
<dbReference type="InterPro" id="IPR038071">
    <property type="entry name" value="UROD/MetE-like_sf"/>
</dbReference>
<dbReference type="InterPro" id="IPR006361">
    <property type="entry name" value="Uroporphyrinogen_deCO2ase_HemE"/>
</dbReference>
<dbReference type="InterPro" id="IPR000257">
    <property type="entry name" value="Uroporphyrinogen_deCOase"/>
</dbReference>
<dbReference type="NCBIfam" id="TIGR01464">
    <property type="entry name" value="hemE"/>
    <property type="match status" value="1"/>
</dbReference>
<dbReference type="PANTHER" id="PTHR21091">
    <property type="entry name" value="METHYLTETRAHYDROFOLATE:HOMOCYSTEINE METHYLTRANSFERASE RELATED"/>
    <property type="match status" value="1"/>
</dbReference>
<dbReference type="PANTHER" id="PTHR21091:SF169">
    <property type="entry name" value="UROPORPHYRINOGEN DECARBOXYLASE"/>
    <property type="match status" value="1"/>
</dbReference>
<dbReference type="Pfam" id="PF01208">
    <property type="entry name" value="URO-D"/>
    <property type="match status" value="1"/>
</dbReference>
<dbReference type="SUPFAM" id="SSF51726">
    <property type="entry name" value="UROD/MetE-like"/>
    <property type="match status" value="1"/>
</dbReference>
<dbReference type="PROSITE" id="PS00906">
    <property type="entry name" value="UROD_1"/>
    <property type="match status" value="1"/>
</dbReference>
<dbReference type="PROSITE" id="PS00907">
    <property type="entry name" value="UROD_2"/>
    <property type="match status" value="1"/>
</dbReference>